<keyword id="KW-1185">Reference proteome</keyword>
<keyword id="KW-0687">Ribonucleoprotein</keyword>
<keyword id="KW-0689">Ribosomal protein</keyword>
<evidence type="ECO:0000255" key="1">
    <source>
        <dbReference type="HAMAP-Rule" id="MF_00373"/>
    </source>
</evidence>
<evidence type="ECO:0000305" key="2"/>
<feature type="chain" id="PRO_0000178561" description="Large ribosomal subunit protein bL28B">
    <location>
        <begin position="1"/>
        <end position="78"/>
    </location>
</feature>
<proteinExistence type="inferred from homology"/>
<organism>
    <name type="scientific">Streptomyces coelicolor (strain ATCC BAA-471 / A3(2) / M145)</name>
    <dbReference type="NCBI Taxonomy" id="100226"/>
    <lineage>
        <taxon>Bacteria</taxon>
        <taxon>Bacillati</taxon>
        <taxon>Actinomycetota</taxon>
        <taxon>Actinomycetes</taxon>
        <taxon>Kitasatosporales</taxon>
        <taxon>Streptomycetaceae</taxon>
        <taxon>Streptomyces</taxon>
        <taxon>Streptomyces albidoflavus group</taxon>
    </lineage>
</organism>
<comment type="similarity">
    <text evidence="1">Belongs to the bacterial ribosomal protein bL28 family.</text>
</comment>
<comment type="sequence caution" evidence="2">
    <conflict type="erroneous initiation">
        <sequence resource="EMBL-CDS" id="CAB42782"/>
    </conflict>
    <text>Truncated N-terminus.</text>
</comment>
<protein>
    <recommendedName>
        <fullName evidence="1">Large ribosomal subunit protein bL28B</fullName>
    </recommendedName>
    <alternativeName>
        <fullName evidence="2">50S ribosomal protein L28 2</fullName>
    </alternativeName>
</protein>
<sequence length="78" mass="8936">MSAHCMLTGARPGFGNRISHSHRRTSRRFDPNIQTKRYWLPSENRHVRLRLSTKGIRTVDSIGVEAAVARIRARGVRI</sequence>
<reference key="1">
    <citation type="journal article" date="2002" name="Nature">
        <title>Complete genome sequence of the model actinomycete Streptomyces coelicolor A3(2).</title>
        <authorList>
            <person name="Bentley S.D."/>
            <person name="Chater K.F."/>
            <person name="Cerdeno-Tarraga A.-M."/>
            <person name="Challis G.L."/>
            <person name="Thomson N.R."/>
            <person name="James K.D."/>
            <person name="Harris D.E."/>
            <person name="Quail M.A."/>
            <person name="Kieser H."/>
            <person name="Harper D."/>
            <person name="Bateman A."/>
            <person name="Brown S."/>
            <person name="Chandra G."/>
            <person name="Chen C.W."/>
            <person name="Collins M."/>
            <person name="Cronin A."/>
            <person name="Fraser A."/>
            <person name="Goble A."/>
            <person name="Hidalgo J."/>
            <person name="Hornsby T."/>
            <person name="Howarth S."/>
            <person name="Huang C.-H."/>
            <person name="Kieser T."/>
            <person name="Larke L."/>
            <person name="Murphy L.D."/>
            <person name="Oliver K."/>
            <person name="O'Neil S."/>
            <person name="Rabbinowitsch E."/>
            <person name="Rajandream M.A."/>
            <person name="Rutherford K.M."/>
            <person name="Rutter S."/>
            <person name="Seeger K."/>
            <person name="Saunders D."/>
            <person name="Sharp S."/>
            <person name="Squares R."/>
            <person name="Squares S."/>
            <person name="Taylor K."/>
            <person name="Warren T."/>
            <person name="Wietzorrek A."/>
            <person name="Woodward J.R."/>
            <person name="Barrell B.G."/>
            <person name="Parkhill J."/>
            <person name="Hopwood D.A."/>
        </authorList>
    </citation>
    <scope>NUCLEOTIDE SEQUENCE [LARGE SCALE GENOMIC DNA]</scope>
    <source>
        <strain>ATCC BAA-471 / A3(2) / M145</strain>
    </source>
</reference>
<gene>
    <name type="primary">rpmB2</name>
    <name type="ordered locus">SCO3429</name>
    <name type="ORF">SCE9.36</name>
</gene>
<accession>Q9X8K8</accession>
<dbReference type="EMBL" id="AL939116">
    <property type="protein sequence ID" value="CAB42782.1"/>
    <property type="status" value="ALT_INIT"/>
    <property type="molecule type" value="Genomic_DNA"/>
</dbReference>
<dbReference type="PIR" id="T36355">
    <property type="entry name" value="T36355"/>
</dbReference>
<dbReference type="RefSeq" id="NP_627635.2">
    <property type="nucleotide sequence ID" value="NC_003888.3"/>
</dbReference>
<dbReference type="SMR" id="Q9X8K8"/>
<dbReference type="FunCoup" id="Q9X8K8">
    <property type="interactions" value="59"/>
</dbReference>
<dbReference type="STRING" id="100226.gene:17761051"/>
<dbReference type="PaxDb" id="100226-SCO3429"/>
<dbReference type="KEGG" id="sco:SCO3429"/>
<dbReference type="PATRIC" id="fig|100226.15.peg.3491"/>
<dbReference type="eggNOG" id="COG0227">
    <property type="taxonomic scope" value="Bacteria"/>
</dbReference>
<dbReference type="HOGENOM" id="CLU_064548_3_1_11"/>
<dbReference type="InParanoid" id="Q9X8K8"/>
<dbReference type="OrthoDB" id="9805609at2"/>
<dbReference type="PhylomeDB" id="Q9X8K8"/>
<dbReference type="Proteomes" id="UP000001973">
    <property type="component" value="Chromosome"/>
</dbReference>
<dbReference type="GO" id="GO:1990904">
    <property type="term" value="C:ribonucleoprotein complex"/>
    <property type="evidence" value="ECO:0007669"/>
    <property type="project" value="UniProtKB-KW"/>
</dbReference>
<dbReference type="GO" id="GO:0005840">
    <property type="term" value="C:ribosome"/>
    <property type="evidence" value="ECO:0007669"/>
    <property type="project" value="UniProtKB-KW"/>
</dbReference>
<dbReference type="GO" id="GO:0003735">
    <property type="term" value="F:structural constituent of ribosome"/>
    <property type="evidence" value="ECO:0000318"/>
    <property type="project" value="GO_Central"/>
</dbReference>
<dbReference type="GO" id="GO:0006412">
    <property type="term" value="P:translation"/>
    <property type="evidence" value="ECO:0007669"/>
    <property type="project" value="UniProtKB-UniRule"/>
</dbReference>
<dbReference type="FunFam" id="2.30.170.40:FF:000001">
    <property type="entry name" value="50S ribosomal protein L28"/>
    <property type="match status" value="1"/>
</dbReference>
<dbReference type="Gene3D" id="2.30.170.40">
    <property type="entry name" value="Ribosomal protein L28/L24"/>
    <property type="match status" value="1"/>
</dbReference>
<dbReference type="HAMAP" id="MF_00373">
    <property type="entry name" value="Ribosomal_bL28"/>
    <property type="match status" value="1"/>
</dbReference>
<dbReference type="InterPro" id="IPR026569">
    <property type="entry name" value="Ribosomal_bL28"/>
</dbReference>
<dbReference type="InterPro" id="IPR034704">
    <property type="entry name" value="Ribosomal_bL28/bL31-like_sf"/>
</dbReference>
<dbReference type="InterPro" id="IPR001383">
    <property type="entry name" value="Ribosomal_bL28_bact-type"/>
</dbReference>
<dbReference type="InterPro" id="IPR037147">
    <property type="entry name" value="Ribosomal_bL28_sf"/>
</dbReference>
<dbReference type="NCBIfam" id="TIGR00009">
    <property type="entry name" value="L28"/>
    <property type="match status" value="1"/>
</dbReference>
<dbReference type="PANTHER" id="PTHR13528">
    <property type="entry name" value="39S RIBOSOMAL PROTEIN L28, MITOCHONDRIAL"/>
    <property type="match status" value="1"/>
</dbReference>
<dbReference type="PANTHER" id="PTHR13528:SF2">
    <property type="entry name" value="LARGE RIBOSOMAL SUBUNIT PROTEIN BL28M"/>
    <property type="match status" value="1"/>
</dbReference>
<dbReference type="Pfam" id="PF00830">
    <property type="entry name" value="Ribosomal_L28"/>
    <property type="match status" value="1"/>
</dbReference>
<dbReference type="SUPFAM" id="SSF143800">
    <property type="entry name" value="L28p-like"/>
    <property type="match status" value="1"/>
</dbReference>
<name>RL28B_STRCO</name>